<accession>P46708</accession>
<gene>
    <name type="primary">tkt</name>
    <name type="ordered locus">ML0583</name>
    <name type="ORF">B1496_F1_26</name>
    <name type="ORF">MLCL536.38</name>
</gene>
<organism>
    <name type="scientific">Mycobacterium leprae (strain TN)</name>
    <dbReference type="NCBI Taxonomy" id="272631"/>
    <lineage>
        <taxon>Bacteria</taxon>
        <taxon>Bacillati</taxon>
        <taxon>Actinomycetota</taxon>
        <taxon>Actinomycetes</taxon>
        <taxon>Mycobacteriales</taxon>
        <taxon>Mycobacteriaceae</taxon>
        <taxon>Mycobacterium</taxon>
    </lineage>
</organism>
<protein>
    <recommendedName>
        <fullName>Transketolase</fullName>
        <shortName>TK</shortName>
        <ecNumber>2.2.1.1</ecNumber>
    </recommendedName>
</protein>
<sequence>MTTLDQISTLTQPRHPDDWTEIDSAAVDTIRVLATDAVQKAGNGHPGTAMSLAPLAYTLFQRTLRHDPNDTAWLGRDRFVLSAGHSSLTLYIQLYLGGFGLELSDIESLRTWGSTTPGHPEFRHTKGVEITTGPLGQGLASAVGMAMASRYERGLFDPDAEPGASPFDHYIYVIASDGDIEEGVTSEASSLAAVQQLGNLIVFYDHNQISIEGDTKITLCEDTAARYRAYGWHVQEVEGGENVVGIEEAIANAKAATDRPSFISLRTIIGYPAPTLINTGKAHGAALGEDEVAATKRILGFDPDKTFAVREDVITHTRGLIARGKEAHERWQLEFEAWAQREPERKALLDRLLAQQLPDGWDADLPNWEPRSKELATRAASGAVLSAIGPKLPELWGGSADLAGSNNTTIKDVDSFGPPSISTDEYTAHWYGRTLHFGVREHAMGAILSGIVLHGPTRAYGGTFLQFSDYMRPSVRLASLMDIDTIYVWTHDSVGLGEDGPTHQPIEHLAALRAIPRLSVVRPADANETAYAWRTILARGANSGPVGLILTRQSVPVLEGTNTEGVARGGYVLGDGGSSEAKEPDVILIATGSEVQLAVAAQKLLADKDIIVRVVSMPCVEWFESQPYEYRDSVLPPSVSARVAVEAGVAQCWHKLVGDTGKIVSIEHYGESADYQTLFREYGFTPEAVVAAAEQVLDN</sequence>
<name>TKT_MYCLE</name>
<comment type="function">
    <text evidence="1">Catalyzes the transfer of a two-carbon ketol group from a ketose donor to an aldose acceptor, via a covalent intermediate with the cofactor thiamine pyrophosphate.</text>
</comment>
<comment type="catalytic activity">
    <reaction>
        <text>D-sedoheptulose 7-phosphate + D-glyceraldehyde 3-phosphate = aldehydo-D-ribose 5-phosphate + D-xylulose 5-phosphate</text>
        <dbReference type="Rhea" id="RHEA:10508"/>
        <dbReference type="ChEBI" id="CHEBI:57483"/>
        <dbReference type="ChEBI" id="CHEBI:57737"/>
        <dbReference type="ChEBI" id="CHEBI:58273"/>
        <dbReference type="ChEBI" id="CHEBI:59776"/>
        <dbReference type="EC" id="2.2.1.1"/>
    </reaction>
</comment>
<comment type="cofactor">
    <cofactor evidence="1">
        <name>Mg(2+)</name>
        <dbReference type="ChEBI" id="CHEBI:18420"/>
    </cofactor>
    <cofactor evidence="1">
        <name>Ca(2+)</name>
        <dbReference type="ChEBI" id="CHEBI:29108"/>
    </cofactor>
    <cofactor evidence="1">
        <name>Mn(2+)</name>
        <dbReference type="ChEBI" id="CHEBI:29035"/>
    </cofactor>
    <cofactor evidence="1">
        <name>Co(2+)</name>
        <dbReference type="ChEBI" id="CHEBI:48828"/>
    </cofactor>
    <text evidence="1">Binds 1 Mg(2+) ion per subunit. Can also utilize other divalent metal cations, such as Ca(2+), Mn(2+) and Co(2+).</text>
</comment>
<comment type="cofactor">
    <cofactor evidence="1">
        <name>thiamine diphosphate</name>
        <dbReference type="ChEBI" id="CHEBI:58937"/>
    </cofactor>
    <text evidence="1">Binds 1 thiamine pyrophosphate per subunit.</text>
</comment>
<comment type="subunit">
    <text evidence="1">Homodimer.</text>
</comment>
<comment type="similarity">
    <text evidence="2">Belongs to the transketolase family.</text>
</comment>
<keyword id="KW-0106">Calcium</keyword>
<keyword id="KW-0460">Magnesium</keyword>
<keyword id="KW-0479">Metal-binding</keyword>
<keyword id="KW-1185">Reference proteome</keyword>
<keyword id="KW-0786">Thiamine pyrophosphate</keyword>
<keyword id="KW-0808">Transferase</keyword>
<reference key="1">
    <citation type="submission" date="1994-03" db="EMBL/GenBank/DDBJ databases">
        <authorList>
            <person name="Smith D.R."/>
            <person name="Robison K."/>
        </authorList>
    </citation>
    <scope>NUCLEOTIDE SEQUENCE [GENOMIC DNA]</scope>
</reference>
<reference key="2">
    <citation type="journal article" date="2001" name="Nature">
        <title>Massive gene decay in the leprosy bacillus.</title>
        <authorList>
            <person name="Cole S.T."/>
            <person name="Eiglmeier K."/>
            <person name="Parkhill J."/>
            <person name="James K.D."/>
            <person name="Thomson N.R."/>
            <person name="Wheeler P.R."/>
            <person name="Honore N."/>
            <person name="Garnier T."/>
            <person name="Churcher C.M."/>
            <person name="Harris D.E."/>
            <person name="Mungall K.L."/>
            <person name="Basham D."/>
            <person name="Brown D."/>
            <person name="Chillingworth T."/>
            <person name="Connor R."/>
            <person name="Davies R.M."/>
            <person name="Devlin K."/>
            <person name="Duthoy S."/>
            <person name="Feltwell T."/>
            <person name="Fraser A."/>
            <person name="Hamlin N."/>
            <person name="Holroyd S."/>
            <person name="Hornsby T."/>
            <person name="Jagels K."/>
            <person name="Lacroix C."/>
            <person name="Maclean J."/>
            <person name="Moule S."/>
            <person name="Murphy L.D."/>
            <person name="Oliver K."/>
            <person name="Quail M.A."/>
            <person name="Rajandream M.A."/>
            <person name="Rutherford K.M."/>
            <person name="Rutter S."/>
            <person name="Seeger K."/>
            <person name="Simon S."/>
            <person name="Simmonds M."/>
            <person name="Skelton J."/>
            <person name="Squares R."/>
            <person name="Squares S."/>
            <person name="Stevens K."/>
            <person name="Taylor K."/>
            <person name="Whitehead S."/>
            <person name="Woodward J.R."/>
            <person name="Barrell B.G."/>
        </authorList>
    </citation>
    <scope>NUCLEOTIDE SEQUENCE [LARGE SCALE GENOMIC DNA]</scope>
    <source>
        <strain>TN</strain>
    </source>
</reference>
<proteinExistence type="inferred from homology"/>
<evidence type="ECO:0000250" key="1"/>
<evidence type="ECO:0000305" key="2"/>
<feature type="chain" id="PRO_0000191861" description="Transketolase">
    <location>
        <begin position="1"/>
        <end position="699"/>
    </location>
</feature>
<feature type="active site" description="Proton donor" evidence="1">
    <location>
        <position position="441"/>
    </location>
</feature>
<feature type="binding site" evidence="1">
    <location>
        <position position="45"/>
    </location>
    <ligand>
        <name>substrate</name>
    </ligand>
</feature>
<feature type="binding site" evidence="1">
    <location>
        <position position="48"/>
    </location>
    <ligand>
        <name>thiamine diphosphate</name>
        <dbReference type="ChEBI" id="CHEBI:58937"/>
    </ligand>
</feature>
<feature type="binding site" evidence="1">
    <location>
        <position position="85"/>
    </location>
    <ligand>
        <name>thiamine diphosphate</name>
        <dbReference type="ChEBI" id="CHEBI:58937"/>
    </ligand>
</feature>
<feature type="binding site" evidence="1">
    <location>
        <begin position="133"/>
        <end position="135"/>
    </location>
    <ligand>
        <name>thiamine diphosphate</name>
        <dbReference type="ChEBI" id="CHEBI:58937"/>
    </ligand>
</feature>
<feature type="binding site" evidence="1">
    <location>
        <position position="177"/>
    </location>
    <ligand>
        <name>Mg(2+)</name>
        <dbReference type="ChEBI" id="CHEBI:18420"/>
    </ligand>
</feature>
<feature type="binding site" evidence="1">
    <location>
        <position position="178"/>
    </location>
    <ligand>
        <name>thiamine diphosphate</name>
        <dbReference type="ChEBI" id="CHEBI:58937"/>
    </ligand>
</feature>
<feature type="binding site" evidence="1">
    <location>
        <position position="207"/>
    </location>
    <ligand>
        <name>Mg(2+)</name>
        <dbReference type="ChEBI" id="CHEBI:18420"/>
    </ligand>
</feature>
<feature type="binding site" evidence="1">
    <location>
        <position position="207"/>
    </location>
    <ligand>
        <name>thiamine diphosphate</name>
        <dbReference type="ChEBI" id="CHEBI:58937"/>
    </ligand>
</feature>
<feature type="binding site" evidence="1">
    <location>
        <position position="209"/>
    </location>
    <ligand>
        <name>Mg(2+)</name>
        <dbReference type="ChEBI" id="CHEBI:18420"/>
    </ligand>
</feature>
<feature type="binding site" evidence="1">
    <location>
        <position position="283"/>
    </location>
    <ligand>
        <name>substrate</name>
    </ligand>
</feature>
<feature type="binding site" evidence="1">
    <location>
        <position position="283"/>
    </location>
    <ligand>
        <name>thiamine diphosphate</name>
        <dbReference type="ChEBI" id="CHEBI:58937"/>
    </ligand>
</feature>
<feature type="binding site" evidence="1">
    <location>
        <position position="378"/>
    </location>
    <ligand>
        <name>substrate</name>
    </ligand>
</feature>
<feature type="binding site" evidence="1">
    <location>
        <position position="405"/>
    </location>
    <ligand>
        <name>substrate</name>
    </ligand>
</feature>
<feature type="binding site" evidence="1">
    <location>
        <position position="467"/>
    </location>
    <ligand>
        <name>thiamine diphosphate</name>
        <dbReference type="ChEBI" id="CHEBI:58937"/>
    </ligand>
</feature>
<feature type="binding site" evidence="1">
    <location>
        <position position="491"/>
    </location>
    <ligand>
        <name>substrate</name>
    </ligand>
</feature>
<feature type="binding site" evidence="1">
    <location>
        <position position="499"/>
    </location>
    <ligand>
        <name>substrate</name>
    </ligand>
</feature>
<feature type="binding site" evidence="1">
    <location>
        <position position="552"/>
    </location>
    <ligand>
        <name>substrate</name>
    </ligand>
</feature>
<feature type="site" description="Important for catalytic activity" evidence="1">
    <location>
        <position position="45"/>
    </location>
</feature>
<feature type="site" description="Important for catalytic activity" evidence="1">
    <location>
        <position position="283"/>
    </location>
</feature>
<dbReference type="EC" id="2.2.1.1"/>
<dbReference type="EMBL" id="U00013">
    <property type="protein sequence ID" value="AAA17139.1"/>
    <property type="molecule type" value="Genomic_DNA"/>
</dbReference>
<dbReference type="EMBL" id="Z99125">
    <property type="protein sequence ID" value="CAB16182.1"/>
    <property type="molecule type" value="Genomic_DNA"/>
</dbReference>
<dbReference type="EMBL" id="AL583919">
    <property type="protein sequence ID" value="CAC30091.1"/>
    <property type="molecule type" value="Genomic_DNA"/>
</dbReference>
<dbReference type="PIR" id="S72772">
    <property type="entry name" value="S72772"/>
</dbReference>
<dbReference type="RefSeq" id="NP_301494.1">
    <property type="nucleotide sequence ID" value="NC_002677.1"/>
</dbReference>
<dbReference type="RefSeq" id="WP_010907818.1">
    <property type="nucleotide sequence ID" value="NC_002677.1"/>
</dbReference>
<dbReference type="SMR" id="P46708"/>
<dbReference type="STRING" id="272631.gene:17574404"/>
<dbReference type="KEGG" id="mle:ML0583"/>
<dbReference type="PATRIC" id="fig|272631.5.peg.1017"/>
<dbReference type="Leproma" id="ML0583"/>
<dbReference type="eggNOG" id="COG0021">
    <property type="taxonomic scope" value="Bacteria"/>
</dbReference>
<dbReference type="HOGENOM" id="CLU_009227_0_0_11"/>
<dbReference type="OrthoDB" id="8732661at2"/>
<dbReference type="Proteomes" id="UP000000806">
    <property type="component" value="Chromosome"/>
</dbReference>
<dbReference type="GO" id="GO:0005829">
    <property type="term" value="C:cytosol"/>
    <property type="evidence" value="ECO:0007669"/>
    <property type="project" value="TreeGrafter"/>
</dbReference>
<dbReference type="GO" id="GO:0000287">
    <property type="term" value="F:magnesium ion binding"/>
    <property type="evidence" value="ECO:0007669"/>
    <property type="project" value="UniProtKB-ARBA"/>
</dbReference>
<dbReference type="GO" id="GO:0004802">
    <property type="term" value="F:transketolase activity"/>
    <property type="evidence" value="ECO:0007669"/>
    <property type="project" value="UniProtKB-EC"/>
</dbReference>
<dbReference type="GO" id="GO:0006098">
    <property type="term" value="P:pentose-phosphate shunt"/>
    <property type="evidence" value="ECO:0007669"/>
    <property type="project" value="TreeGrafter"/>
</dbReference>
<dbReference type="CDD" id="cd07033">
    <property type="entry name" value="TPP_PYR_DXS_TK_like"/>
    <property type="match status" value="1"/>
</dbReference>
<dbReference type="CDD" id="cd02012">
    <property type="entry name" value="TPP_TK"/>
    <property type="match status" value="1"/>
</dbReference>
<dbReference type="FunFam" id="3.40.50.920:FF:000003">
    <property type="entry name" value="Transketolase"/>
    <property type="match status" value="1"/>
</dbReference>
<dbReference type="FunFam" id="3.40.50.970:FF:000003">
    <property type="entry name" value="Transketolase"/>
    <property type="match status" value="1"/>
</dbReference>
<dbReference type="FunFam" id="3.40.50.970:FF:000004">
    <property type="entry name" value="Transketolase"/>
    <property type="match status" value="1"/>
</dbReference>
<dbReference type="Gene3D" id="3.40.50.920">
    <property type="match status" value="1"/>
</dbReference>
<dbReference type="Gene3D" id="3.40.50.970">
    <property type="match status" value="2"/>
</dbReference>
<dbReference type="InterPro" id="IPR029061">
    <property type="entry name" value="THDP-binding"/>
</dbReference>
<dbReference type="InterPro" id="IPR009014">
    <property type="entry name" value="Transketo_C/PFOR_II"/>
</dbReference>
<dbReference type="InterPro" id="IPR055152">
    <property type="entry name" value="Transketolase-like_C_2"/>
</dbReference>
<dbReference type="InterPro" id="IPR005475">
    <property type="entry name" value="Transketolase-like_Pyr-bd"/>
</dbReference>
<dbReference type="InterPro" id="IPR005478">
    <property type="entry name" value="Transketolase_bac-like"/>
</dbReference>
<dbReference type="InterPro" id="IPR020826">
    <property type="entry name" value="Transketolase_BS"/>
</dbReference>
<dbReference type="InterPro" id="IPR049557">
    <property type="entry name" value="Transketolase_CS"/>
</dbReference>
<dbReference type="InterPro" id="IPR033247">
    <property type="entry name" value="Transketolase_fam"/>
</dbReference>
<dbReference type="InterPro" id="IPR005474">
    <property type="entry name" value="Transketolase_N"/>
</dbReference>
<dbReference type="NCBIfam" id="TIGR00232">
    <property type="entry name" value="tktlase_bact"/>
    <property type="match status" value="1"/>
</dbReference>
<dbReference type="PANTHER" id="PTHR43522">
    <property type="entry name" value="TRANSKETOLASE"/>
    <property type="match status" value="1"/>
</dbReference>
<dbReference type="PANTHER" id="PTHR43522:SF2">
    <property type="entry name" value="TRANSKETOLASE 1-RELATED"/>
    <property type="match status" value="1"/>
</dbReference>
<dbReference type="Pfam" id="PF02779">
    <property type="entry name" value="Transket_pyr"/>
    <property type="match status" value="1"/>
</dbReference>
<dbReference type="Pfam" id="PF22613">
    <property type="entry name" value="Transketolase_C_1"/>
    <property type="match status" value="1"/>
</dbReference>
<dbReference type="Pfam" id="PF00456">
    <property type="entry name" value="Transketolase_N"/>
    <property type="match status" value="1"/>
</dbReference>
<dbReference type="SMART" id="SM00861">
    <property type="entry name" value="Transket_pyr"/>
    <property type="match status" value="1"/>
</dbReference>
<dbReference type="SUPFAM" id="SSF52518">
    <property type="entry name" value="Thiamin diphosphate-binding fold (THDP-binding)"/>
    <property type="match status" value="2"/>
</dbReference>
<dbReference type="SUPFAM" id="SSF52922">
    <property type="entry name" value="TK C-terminal domain-like"/>
    <property type="match status" value="1"/>
</dbReference>
<dbReference type="PROSITE" id="PS00801">
    <property type="entry name" value="TRANSKETOLASE_1"/>
    <property type="match status" value="1"/>
</dbReference>
<dbReference type="PROSITE" id="PS00802">
    <property type="entry name" value="TRANSKETOLASE_2"/>
    <property type="match status" value="1"/>
</dbReference>